<feature type="chain" id="PRO_0000364498" description="Fructose-1,6-bisphosphatase class 1">
    <location>
        <begin position="1"/>
        <end position="338"/>
    </location>
</feature>
<feature type="binding site" evidence="1">
    <location>
        <position position="94"/>
    </location>
    <ligand>
        <name>Mg(2+)</name>
        <dbReference type="ChEBI" id="CHEBI:18420"/>
        <label>1</label>
    </ligand>
</feature>
<feature type="binding site" evidence="1">
    <location>
        <position position="116"/>
    </location>
    <ligand>
        <name>Mg(2+)</name>
        <dbReference type="ChEBI" id="CHEBI:18420"/>
        <label>1</label>
    </ligand>
</feature>
<feature type="binding site" evidence="1">
    <location>
        <position position="116"/>
    </location>
    <ligand>
        <name>Mg(2+)</name>
        <dbReference type="ChEBI" id="CHEBI:18420"/>
        <label>2</label>
    </ligand>
</feature>
<feature type="binding site" evidence="1">
    <location>
        <position position="118"/>
    </location>
    <ligand>
        <name>Mg(2+)</name>
        <dbReference type="ChEBI" id="CHEBI:18420"/>
        <label>1</label>
    </ligand>
</feature>
<feature type="binding site" evidence="1">
    <location>
        <begin position="119"/>
        <end position="122"/>
    </location>
    <ligand>
        <name>substrate</name>
    </ligand>
</feature>
<feature type="binding site" evidence="1">
    <location>
        <position position="119"/>
    </location>
    <ligand>
        <name>Mg(2+)</name>
        <dbReference type="ChEBI" id="CHEBI:18420"/>
        <label>2</label>
    </ligand>
</feature>
<feature type="binding site" evidence="1">
    <location>
        <position position="210"/>
    </location>
    <ligand>
        <name>substrate</name>
    </ligand>
</feature>
<feature type="binding site" evidence="1">
    <location>
        <position position="276"/>
    </location>
    <ligand>
        <name>substrate</name>
    </ligand>
</feature>
<feature type="binding site" evidence="1">
    <location>
        <position position="282"/>
    </location>
    <ligand>
        <name>Mg(2+)</name>
        <dbReference type="ChEBI" id="CHEBI:18420"/>
        <label>2</label>
    </ligand>
</feature>
<reference key="1">
    <citation type="journal article" date="2011" name="J. Bacteriol.">
        <title>Complete genome sequence of the plant growth-promoting endophyte Burkholderia phytofirmans strain PsJN.</title>
        <authorList>
            <person name="Weilharter A."/>
            <person name="Mitter B."/>
            <person name="Shin M.V."/>
            <person name="Chain P.S."/>
            <person name="Nowak J."/>
            <person name="Sessitsch A."/>
        </authorList>
    </citation>
    <scope>NUCLEOTIDE SEQUENCE [LARGE SCALE GENOMIC DNA]</scope>
    <source>
        <strain>DSM 17436 / LMG 22146 / PsJN</strain>
    </source>
</reference>
<gene>
    <name evidence="1" type="primary">fbp</name>
    <name type="ordered locus">Bphyt_3071</name>
</gene>
<accession>B2T699</accession>
<evidence type="ECO:0000255" key="1">
    <source>
        <dbReference type="HAMAP-Rule" id="MF_01855"/>
    </source>
</evidence>
<name>F16PA_PARPJ</name>
<comment type="catalytic activity">
    <reaction evidence="1">
        <text>beta-D-fructose 1,6-bisphosphate + H2O = beta-D-fructose 6-phosphate + phosphate</text>
        <dbReference type="Rhea" id="RHEA:11064"/>
        <dbReference type="ChEBI" id="CHEBI:15377"/>
        <dbReference type="ChEBI" id="CHEBI:32966"/>
        <dbReference type="ChEBI" id="CHEBI:43474"/>
        <dbReference type="ChEBI" id="CHEBI:57634"/>
        <dbReference type="EC" id="3.1.3.11"/>
    </reaction>
</comment>
<comment type="cofactor">
    <cofactor evidence="1">
        <name>Mg(2+)</name>
        <dbReference type="ChEBI" id="CHEBI:18420"/>
    </cofactor>
    <text evidence="1">Binds 2 magnesium ions per subunit.</text>
</comment>
<comment type="pathway">
    <text evidence="1">Carbohydrate biosynthesis; gluconeogenesis.</text>
</comment>
<comment type="subunit">
    <text evidence="1">Homotetramer.</text>
</comment>
<comment type="subcellular location">
    <subcellularLocation>
        <location evidence="1">Cytoplasm</location>
    </subcellularLocation>
</comment>
<comment type="similarity">
    <text evidence="1">Belongs to the FBPase class 1 family.</text>
</comment>
<organism>
    <name type="scientific">Paraburkholderia phytofirmans (strain DSM 17436 / LMG 22146 / PsJN)</name>
    <name type="common">Burkholderia phytofirmans</name>
    <dbReference type="NCBI Taxonomy" id="398527"/>
    <lineage>
        <taxon>Bacteria</taxon>
        <taxon>Pseudomonadati</taxon>
        <taxon>Pseudomonadota</taxon>
        <taxon>Betaproteobacteria</taxon>
        <taxon>Burkholderiales</taxon>
        <taxon>Burkholderiaceae</taxon>
        <taxon>Paraburkholderia</taxon>
    </lineage>
</organism>
<proteinExistence type="inferred from homology"/>
<protein>
    <recommendedName>
        <fullName evidence="1">Fructose-1,6-bisphosphatase class 1</fullName>
        <shortName evidence="1">FBPase class 1</shortName>
        <ecNumber evidence="1">3.1.3.11</ecNumber>
    </recommendedName>
    <alternativeName>
        <fullName evidence="1">D-fructose-1,6-bisphosphate 1-phosphohydrolase class 1</fullName>
    </alternativeName>
</protein>
<dbReference type="EC" id="3.1.3.11" evidence="1"/>
<dbReference type="EMBL" id="CP001052">
    <property type="protein sequence ID" value="ACD17463.1"/>
    <property type="molecule type" value="Genomic_DNA"/>
</dbReference>
<dbReference type="RefSeq" id="WP_012434041.1">
    <property type="nucleotide sequence ID" value="NC_010681.1"/>
</dbReference>
<dbReference type="SMR" id="B2T699"/>
<dbReference type="STRING" id="398527.Bphyt_3071"/>
<dbReference type="KEGG" id="bpy:Bphyt_3071"/>
<dbReference type="eggNOG" id="COG0158">
    <property type="taxonomic scope" value="Bacteria"/>
</dbReference>
<dbReference type="HOGENOM" id="CLU_039977_0_0_4"/>
<dbReference type="OrthoDB" id="9806756at2"/>
<dbReference type="UniPathway" id="UPA00138"/>
<dbReference type="Proteomes" id="UP000001739">
    <property type="component" value="Chromosome 1"/>
</dbReference>
<dbReference type="GO" id="GO:0005829">
    <property type="term" value="C:cytosol"/>
    <property type="evidence" value="ECO:0007669"/>
    <property type="project" value="TreeGrafter"/>
</dbReference>
<dbReference type="GO" id="GO:0042132">
    <property type="term" value="F:fructose 1,6-bisphosphate 1-phosphatase activity"/>
    <property type="evidence" value="ECO:0007669"/>
    <property type="project" value="UniProtKB-UniRule"/>
</dbReference>
<dbReference type="GO" id="GO:0000287">
    <property type="term" value="F:magnesium ion binding"/>
    <property type="evidence" value="ECO:0007669"/>
    <property type="project" value="UniProtKB-UniRule"/>
</dbReference>
<dbReference type="GO" id="GO:0030388">
    <property type="term" value="P:fructose 1,6-bisphosphate metabolic process"/>
    <property type="evidence" value="ECO:0007669"/>
    <property type="project" value="TreeGrafter"/>
</dbReference>
<dbReference type="GO" id="GO:0006002">
    <property type="term" value="P:fructose 6-phosphate metabolic process"/>
    <property type="evidence" value="ECO:0007669"/>
    <property type="project" value="TreeGrafter"/>
</dbReference>
<dbReference type="GO" id="GO:0006000">
    <property type="term" value="P:fructose metabolic process"/>
    <property type="evidence" value="ECO:0007669"/>
    <property type="project" value="TreeGrafter"/>
</dbReference>
<dbReference type="GO" id="GO:0006094">
    <property type="term" value="P:gluconeogenesis"/>
    <property type="evidence" value="ECO:0007669"/>
    <property type="project" value="UniProtKB-UniRule"/>
</dbReference>
<dbReference type="GO" id="GO:0005986">
    <property type="term" value="P:sucrose biosynthetic process"/>
    <property type="evidence" value="ECO:0007669"/>
    <property type="project" value="TreeGrafter"/>
</dbReference>
<dbReference type="CDD" id="cd00354">
    <property type="entry name" value="FBPase"/>
    <property type="match status" value="1"/>
</dbReference>
<dbReference type="FunFam" id="3.30.540.10:FF:000006">
    <property type="entry name" value="Fructose-1,6-bisphosphatase class 1"/>
    <property type="match status" value="1"/>
</dbReference>
<dbReference type="FunFam" id="3.40.190.80:FF:000011">
    <property type="entry name" value="Fructose-1,6-bisphosphatase class 1"/>
    <property type="match status" value="1"/>
</dbReference>
<dbReference type="Gene3D" id="3.40.190.80">
    <property type="match status" value="1"/>
</dbReference>
<dbReference type="Gene3D" id="3.30.540.10">
    <property type="entry name" value="Fructose-1,6-Bisphosphatase, subunit A, domain 1"/>
    <property type="match status" value="1"/>
</dbReference>
<dbReference type="HAMAP" id="MF_01855">
    <property type="entry name" value="FBPase_class1"/>
    <property type="match status" value="1"/>
</dbReference>
<dbReference type="InterPro" id="IPR044015">
    <property type="entry name" value="FBPase_C_dom"/>
</dbReference>
<dbReference type="InterPro" id="IPR000146">
    <property type="entry name" value="FBPase_class-1"/>
</dbReference>
<dbReference type="InterPro" id="IPR033391">
    <property type="entry name" value="FBPase_N"/>
</dbReference>
<dbReference type="InterPro" id="IPR028343">
    <property type="entry name" value="FBPtase"/>
</dbReference>
<dbReference type="NCBIfam" id="NF006778">
    <property type="entry name" value="PRK09293.1-1"/>
    <property type="match status" value="1"/>
</dbReference>
<dbReference type="NCBIfam" id="NF006779">
    <property type="entry name" value="PRK09293.1-3"/>
    <property type="match status" value="1"/>
</dbReference>
<dbReference type="NCBIfam" id="NF006780">
    <property type="entry name" value="PRK09293.1-4"/>
    <property type="match status" value="1"/>
</dbReference>
<dbReference type="PANTHER" id="PTHR11556">
    <property type="entry name" value="FRUCTOSE-1,6-BISPHOSPHATASE-RELATED"/>
    <property type="match status" value="1"/>
</dbReference>
<dbReference type="PANTHER" id="PTHR11556:SF35">
    <property type="entry name" value="SEDOHEPTULOSE-1,7-BISPHOSPHATASE, CHLOROPLASTIC"/>
    <property type="match status" value="1"/>
</dbReference>
<dbReference type="Pfam" id="PF00316">
    <property type="entry name" value="FBPase"/>
    <property type="match status" value="1"/>
</dbReference>
<dbReference type="Pfam" id="PF18913">
    <property type="entry name" value="FBPase_C"/>
    <property type="match status" value="1"/>
</dbReference>
<dbReference type="PIRSF" id="PIRSF500210">
    <property type="entry name" value="FBPtase"/>
    <property type="match status" value="1"/>
</dbReference>
<dbReference type="PIRSF" id="PIRSF000904">
    <property type="entry name" value="FBPtase_SBPase"/>
    <property type="match status" value="1"/>
</dbReference>
<dbReference type="PRINTS" id="PR00115">
    <property type="entry name" value="F16BPHPHTASE"/>
</dbReference>
<dbReference type="SUPFAM" id="SSF56655">
    <property type="entry name" value="Carbohydrate phosphatase"/>
    <property type="match status" value="1"/>
</dbReference>
<sequence>MALQRRTTLTKYLIEQQRETNNLPADLRLLIEVVARACKAISYHVSKGALGDALGTAGSENVQGEVQKKLDILSNEILLEANEWGGNLAGMASEEMEQFFPIPANYPKGEYLLVFDPLDGSSNIDVNVSIGTIFSVLRCPDGQQPTEQSFLQPGTQQVAAGYAVYGPQTVLVLTTGNGVNCFTLDRELGSWVLTQSDMRIPVETREYAINASNERHWYPPVEQYIGELKAGKDGPRQSDFNMRWIASMVADVHRILNRGGIFMYPADKRTPDKPGKLRLMYEANPMAFIVEQAGGAATNGEKRILDIQPKSLHERVAVFLGSKNEVDRVTRYHLETKK</sequence>
<keyword id="KW-0119">Carbohydrate metabolism</keyword>
<keyword id="KW-0963">Cytoplasm</keyword>
<keyword id="KW-0378">Hydrolase</keyword>
<keyword id="KW-0460">Magnesium</keyword>
<keyword id="KW-0479">Metal-binding</keyword>